<accession>Q5X6T6</accession>
<reference key="1">
    <citation type="journal article" date="2004" name="Nat. Genet.">
        <title>Evidence in the Legionella pneumophila genome for exploitation of host cell functions and high genome plasticity.</title>
        <authorList>
            <person name="Cazalet C."/>
            <person name="Rusniok C."/>
            <person name="Brueggemann H."/>
            <person name="Zidane N."/>
            <person name="Magnier A."/>
            <person name="Ma L."/>
            <person name="Tichit M."/>
            <person name="Jarraud S."/>
            <person name="Bouchier C."/>
            <person name="Vandenesch F."/>
            <person name="Kunst F."/>
            <person name="Etienne J."/>
            <person name="Glaser P."/>
            <person name="Buchrieser C."/>
        </authorList>
    </citation>
    <scope>NUCLEOTIDE SEQUENCE [LARGE SCALE GENOMIC DNA]</scope>
    <source>
        <strain>Paris</strain>
    </source>
</reference>
<feature type="chain" id="PRO_0000215717" description="ATP-dependent Clp protease adapter protein ClpS">
    <location>
        <begin position="1"/>
        <end position="111"/>
    </location>
</feature>
<dbReference type="EMBL" id="CR628336">
    <property type="protein sequence ID" value="CAH12030.1"/>
    <property type="molecule type" value="Genomic_DNA"/>
</dbReference>
<dbReference type="RefSeq" id="WP_010946553.1">
    <property type="nucleotide sequence ID" value="NC_006368.1"/>
</dbReference>
<dbReference type="SMR" id="Q5X6T6"/>
<dbReference type="GeneID" id="57034805"/>
<dbReference type="KEGG" id="lpp:lpp0879"/>
<dbReference type="LegioList" id="lpp0879"/>
<dbReference type="HOGENOM" id="CLU_134358_2_1_6"/>
<dbReference type="GO" id="GO:0030163">
    <property type="term" value="P:protein catabolic process"/>
    <property type="evidence" value="ECO:0007669"/>
    <property type="project" value="InterPro"/>
</dbReference>
<dbReference type="GO" id="GO:0006508">
    <property type="term" value="P:proteolysis"/>
    <property type="evidence" value="ECO:0007669"/>
    <property type="project" value="UniProtKB-UniRule"/>
</dbReference>
<dbReference type="FunFam" id="3.30.1390.10:FF:000002">
    <property type="entry name" value="ATP-dependent Clp protease adapter protein ClpS"/>
    <property type="match status" value="1"/>
</dbReference>
<dbReference type="Gene3D" id="3.30.1390.10">
    <property type="match status" value="1"/>
</dbReference>
<dbReference type="HAMAP" id="MF_00302">
    <property type="entry name" value="ClpS"/>
    <property type="match status" value="1"/>
</dbReference>
<dbReference type="InterPro" id="IPR022935">
    <property type="entry name" value="ClpS"/>
</dbReference>
<dbReference type="InterPro" id="IPR003769">
    <property type="entry name" value="ClpS_core"/>
</dbReference>
<dbReference type="InterPro" id="IPR014719">
    <property type="entry name" value="Ribosomal_bL12_C/ClpS-like"/>
</dbReference>
<dbReference type="NCBIfam" id="NF000672">
    <property type="entry name" value="PRK00033.1-5"/>
    <property type="match status" value="1"/>
</dbReference>
<dbReference type="PANTHER" id="PTHR33473:SF19">
    <property type="entry name" value="ATP-DEPENDENT CLP PROTEASE ADAPTER PROTEIN CLPS"/>
    <property type="match status" value="1"/>
</dbReference>
<dbReference type="PANTHER" id="PTHR33473">
    <property type="entry name" value="ATP-DEPENDENT CLP PROTEASE ADAPTER PROTEIN CLPS1, CHLOROPLASTIC"/>
    <property type="match status" value="1"/>
</dbReference>
<dbReference type="Pfam" id="PF02617">
    <property type="entry name" value="ClpS"/>
    <property type="match status" value="1"/>
</dbReference>
<dbReference type="SUPFAM" id="SSF54736">
    <property type="entry name" value="ClpS-like"/>
    <property type="match status" value="1"/>
</dbReference>
<protein>
    <recommendedName>
        <fullName evidence="1">ATP-dependent Clp protease adapter protein ClpS</fullName>
    </recommendedName>
</protein>
<proteinExistence type="inferred from homology"/>
<organism>
    <name type="scientific">Legionella pneumophila (strain Paris)</name>
    <dbReference type="NCBI Taxonomy" id="297246"/>
    <lineage>
        <taxon>Bacteria</taxon>
        <taxon>Pseudomonadati</taxon>
        <taxon>Pseudomonadota</taxon>
        <taxon>Gammaproteobacteria</taxon>
        <taxon>Legionellales</taxon>
        <taxon>Legionellaceae</taxon>
        <taxon>Legionella</taxon>
    </lineage>
</organism>
<gene>
    <name evidence="1" type="primary">clpS</name>
    <name type="ordered locus">lpp0879</name>
</gene>
<comment type="function">
    <text evidence="1">Involved in the modulation of the specificity of the ClpAP-mediated ATP-dependent protein degradation.</text>
</comment>
<comment type="subunit">
    <text evidence="1">Binds to the N-terminal domain of the chaperone ClpA.</text>
</comment>
<comment type="similarity">
    <text evidence="1">Belongs to the ClpS family.</text>
</comment>
<sequence>MSKQNLEEIIQTGIADTELSTEISTAIKRPRKYKVLLLNDDYTPMDFVVEVLKHFFHLNEEVAIQVMLQVHFQGKGVCGVFTRDIAETKVALVNEYARMNQHPLLSSMEPE</sequence>
<evidence type="ECO:0000255" key="1">
    <source>
        <dbReference type="HAMAP-Rule" id="MF_00302"/>
    </source>
</evidence>
<name>CLPS_LEGPA</name>